<accession>Q63XA0</accession>
<keyword id="KW-0474">Menaquinone biosynthesis</keyword>
<keyword id="KW-0489">Methyltransferase</keyword>
<keyword id="KW-1185">Reference proteome</keyword>
<keyword id="KW-0949">S-adenosyl-L-methionine</keyword>
<keyword id="KW-0808">Transferase</keyword>
<keyword id="KW-0831">Ubiquinone biosynthesis</keyword>
<sequence>MSKTHFGFETVEENEKAKKVAGVFHSVASNYDLMNDLMSAGLHRAWKAFTIAQANVRPGGKVLDIAAGTGDLTKAFAKAAGPTGEVWHTDINESMLRVGRDRLLDKGVVTPSLLCDAEKLPFPDNYFDVVTVAFGLRNMTHKDSALAEMRRVAKPGGRVMVLEFSKVWEPLKKAYDVYSFKVLPWLGDKFAKDADSYRYLAESIRMHPDQETLKTMMEQAGLDAVKYYNLSGGVVALHVGTKY</sequence>
<comment type="function">
    <text evidence="1">Methyltransferase required for the conversion of demethylmenaquinol (DMKH2) to menaquinol (MKH2) and the conversion of 2-polyprenyl-6-methoxy-1,4-benzoquinol (DDMQH2) to 2-polyprenyl-3-methyl-6-methoxy-1,4-benzoquinol (DMQH2).</text>
</comment>
<comment type="catalytic activity">
    <reaction evidence="1">
        <text>a 2-demethylmenaquinol + S-adenosyl-L-methionine = a menaquinol + S-adenosyl-L-homocysteine + H(+)</text>
        <dbReference type="Rhea" id="RHEA:42640"/>
        <dbReference type="Rhea" id="RHEA-COMP:9539"/>
        <dbReference type="Rhea" id="RHEA-COMP:9563"/>
        <dbReference type="ChEBI" id="CHEBI:15378"/>
        <dbReference type="ChEBI" id="CHEBI:18151"/>
        <dbReference type="ChEBI" id="CHEBI:55437"/>
        <dbReference type="ChEBI" id="CHEBI:57856"/>
        <dbReference type="ChEBI" id="CHEBI:59789"/>
        <dbReference type="EC" id="2.1.1.163"/>
    </reaction>
</comment>
<comment type="catalytic activity">
    <reaction evidence="1">
        <text>a 2-methoxy-6-(all-trans-polyprenyl)benzene-1,4-diol + S-adenosyl-L-methionine = a 5-methoxy-2-methyl-3-(all-trans-polyprenyl)benzene-1,4-diol + S-adenosyl-L-homocysteine + H(+)</text>
        <dbReference type="Rhea" id="RHEA:28286"/>
        <dbReference type="Rhea" id="RHEA-COMP:10858"/>
        <dbReference type="Rhea" id="RHEA-COMP:10859"/>
        <dbReference type="ChEBI" id="CHEBI:15378"/>
        <dbReference type="ChEBI" id="CHEBI:57856"/>
        <dbReference type="ChEBI" id="CHEBI:59789"/>
        <dbReference type="ChEBI" id="CHEBI:84166"/>
        <dbReference type="ChEBI" id="CHEBI:84167"/>
        <dbReference type="EC" id="2.1.1.201"/>
    </reaction>
</comment>
<comment type="pathway">
    <text evidence="1">Quinol/quinone metabolism; menaquinone biosynthesis; menaquinol from 1,4-dihydroxy-2-naphthoate: step 2/2.</text>
</comment>
<comment type="pathway">
    <text evidence="1">Cofactor biosynthesis; ubiquinone biosynthesis.</text>
</comment>
<comment type="similarity">
    <text evidence="1">Belongs to the class I-like SAM-binding methyltransferase superfamily. MenG/UbiE family.</text>
</comment>
<evidence type="ECO:0000255" key="1">
    <source>
        <dbReference type="HAMAP-Rule" id="MF_01813"/>
    </source>
</evidence>
<feature type="chain" id="PRO_0000193259" description="Ubiquinone/menaquinone biosynthesis C-methyltransferase UbiE">
    <location>
        <begin position="1"/>
        <end position="243"/>
    </location>
</feature>
<feature type="binding site" evidence="1">
    <location>
        <position position="69"/>
    </location>
    <ligand>
        <name>S-adenosyl-L-methionine</name>
        <dbReference type="ChEBI" id="CHEBI:59789"/>
    </ligand>
</feature>
<feature type="binding site" evidence="1">
    <location>
        <position position="90"/>
    </location>
    <ligand>
        <name>S-adenosyl-L-methionine</name>
        <dbReference type="ChEBI" id="CHEBI:59789"/>
    </ligand>
</feature>
<feature type="binding site" evidence="1">
    <location>
        <begin position="116"/>
        <end position="117"/>
    </location>
    <ligand>
        <name>S-adenosyl-L-methionine</name>
        <dbReference type="ChEBI" id="CHEBI:59789"/>
    </ligand>
</feature>
<name>UBIE_BURPS</name>
<reference key="1">
    <citation type="journal article" date="2004" name="Proc. Natl. Acad. Sci. U.S.A.">
        <title>Genomic plasticity of the causative agent of melioidosis, Burkholderia pseudomallei.</title>
        <authorList>
            <person name="Holden M.T.G."/>
            <person name="Titball R.W."/>
            <person name="Peacock S.J."/>
            <person name="Cerdeno-Tarraga A.-M."/>
            <person name="Atkins T."/>
            <person name="Crossman L.C."/>
            <person name="Pitt T."/>
            <person name="Churcher C."/>
            <person name="Mungall K.L."/>
            <person name="Bentley S.D."/>
            <person name="Sebaihia M."/>
            <person name="Thomson N.R."/>
            <person name="Bason N."/>
            <person name="Beacham I.R."/>
            <person name="Brooks K."/>
            <person name="Brown K.A."/>
            <person name="Brown N.F."/>
            <person name="Challis G.L."/>
            <person name="Cherevach I."/>
            <person name="Chillingworth T."/>
            <person name="Cronin A."/>
            <person name="Crossett B."/>
            <person name="Davis P."/>
            <person name="DeShazer D."/>
            <person name="Feltwell T."/>
            <person name="Fraser A."/>
            <person name="Hance Z."/>
            <person name="Hauser H."/>
            <person name="Holroyd S."/>
            <person name="Jagels K."/>
            <person name="Keith K.E."/>
            <person name="Maddison M."/>
            <person name="Moule S."/>
            <person name="Price C."/>
            <person name="Quail M.A."/>
            <person name="Rabbinowitsch E."/>
            <person name="Rutherford K."/>
            <person name="Sanders M."/>
            <person name="Simmonds M."/>
            <person name="Songsivilai S."/>
            <person name="Stevens K."/>
            <person name="Tumapa S."/>
            <person name="Vesaratchavest M."/>
            <person name="Whitehead S."/>
            <person name="Yeats C."/>
            <person name="Barrell B.G."/>
            <person name="Oyston P.C.F."/>
            <person name="Parkhill J."/>
        </authorList>
    </citation>
    <scope>NUCLEOTIDE SEQUENCE [LARGE SCALE GENOMIC DNA]</scope>
    <source>
        <strain>K96243</strain>
    </source>
</reference>
<proteinExistence type="inferred from homology"/>
<gene>
    <name evidence="1" type="primary">ubiE</name>
    <name type="ordered locus">BPSL0637</name>
</gene>
<organism>
    <name type="scientific">Burkholderia pseudomallei (strain K96243)</name>
    <dbReference type="NCBI Taxonomy" id="272560"/>
    <lineage>
        <taxon>Bacteria</taxon>
        <taxon>Pseudomonadati</taxon>
        <taxon>Pseudomonadota</taxon>
        <taxon>Betaproteobacteria</taxon>
        <taxon>Burkholderiales</taxon>
        <taxon>Burkholderiaceae</taxon>
        <taxon>Burkholderia</taxon>
        <taxon>pseudomallei group</taxon>
    </lineage>
</organism>
<dbReference type="EC" id="2.1.1.163" evidence="1"/>
<dbReference type="EC" id="2.1.1.201" evidence="1"/>
<dbReference type="EMBL" id="BX571965">
    <property type="protein sequence ID" value="CAH34630.1"/>
    <property type="molecule type" value="Genomic_DNA"/>
</dbReference>
<dbReference type="RefSeq" id="WP_004189973.1">
    <property type="nucleotide sequence ID" value="NZ_CP009538.1"/>
</dbReference>
<dbReference type="RefSeq" id="YP_107266.1">
    <property type="nucleotide sequence ID" value="NC_006350.1"/>
</dbReference>
<dbReference type="SMR" id="Q63XA0"/>
<dbReference type="STRING" id="272560.BPSL0637"/>
<dbReference type="GeneID" id="93059149"/>
<dbReference type="KEGG" id="bps:BPSL0637"/>
<dbReference type="PATRIC" id="fig|272560.51.peg.986"/>
<dbReference type="eggNOG" id="COG2226">
    <property type="taxonomic scope" value="Bacteria"/>
</dbReference>
<dbReference type="UniPathway" id="UPA00079">
    <property type="reaction ID" value="UER00169"/>
</dbReference>
<dbReference type="UniPathway" id="UPA00232"/>
<dbReference type="Proteomes" id="UP000000605">
    <property type="component" value="Chromosome 1"/>
</dbReference>
<dbReference type="GO" id="GO:0008425">
    <property type="term" value="F:2-methoxy-6-polyprenyl-1,4-benzoquinol methyltransferase activity"/>
    <property type="evidence" value="ECO:0007669"/>
    <property type="project" value="UniProtKB-UniRule"/>
</dbReference>
<dbReference type="GO" id="GO:0043770">
    <property type="term" value="F:demethylmenaquinone methyltransferase activity"/>
    <property type="evidence" value="ECO:0007669"/>
    <property type="project" value="UniProtKB-UniRule"/>
</dbReference>
<dbReference type="GO" id="GO:0009060">
    <property type="term" value="P:aerobic respiration"/>
    <property type="evidence" value="ECO:0007669"/>
    <property type="project" value="UniProtKB-UniRule"/>
</dbReference>
<dbReference type="GO" id="GO:0009234">
    <property type="term" value="P:menaquinone biosynthetic process"/>
    <property type="evidence" value="ECO:0007669"/>
    <property type="project" value="UniProtKB-UniRule"/>
</dbReference>
<dbReference type="GO" id="GO:0032259">
    <property type="term" value="P:methylation"/>
    <property type="evidence" value="ECO:0007669"/>
    <property type="project" value="UniProtKB-KW"/>
</dbReference>
<dbReference type="CDD" id="cd02440">
    <property type="entry name" value="AdoMet_MTases"/>
    <property type="match status" value="1"/>
</dbReference>
<dbReference type="Gene3D" id="3.40.50.150">
    <property type="entry name" value="Vaccinia Virus protein VP39"/>
    <property type="match status" value="1"/>
</dbReference>
<dbReference type="HAMAP" id="MF_01813">
    <property type="entry name" value="MenG_UbiE_methyltr"/>
    <property type="match status" value="1"/>
</dbReference>
<dbReference type="InterPro" id="IPR029063">
    <property type="entry name" value="SAM-dependent_MTases_sf"/>
</dbReference>
<dbReference type="InterPro" id="IPR004033">
    <property type="entry name" value="UbiE/COQ5_MeTrFase"/>
</dbReference>
<dbReference type="InterPro" id="IPR023576">
    <property type="entry name" value="UbiE/COQ5_MeTrFase_CS"/>
</dbReference>
<dbReference type="NCBIfam" id="TIGR01934">
    <property type="entry name" value="MenG_MenH_UbiE"/>
    <property type="match status" value="1"/>
</dbReference>
<dbReference type="NCBIfam" id="NF001240">
    <property type="entry name" value="PRK00216.1-1"/>
    <property type="match status" value="1"/>
</dbReference>
<dbReference type="NCBIfam" id="NF001244">
    <property type="entry name" value="PRK00216.1-5"/>
    <property type="match status" value="1"/>
</dbReference>
<dbReference type="PANTHER" id="PTHR43591:SF24">
    <property type="entry name" value="2-METHOXY-6-POLYPRENYL-1,4-BENZOQUINOL METHYLASE, MITOCHONDRIAL"/>
    <property type="match status" value="1"/>
</dbReference>
<dbReference type="PANTHER" id="PTHR43591">
    <property type="entry name" value="METHYLTRANSFERASE"/>
    <property type="match status" value="1"/>
</dbReference>
<dbReference type="Pfam" id="PF01209">
    <property type="entry name" value="Ubie_methyltran"/>
    <property type="match status" value="1"/>
</dbReference>
<dbReference type="SUPFAM" id="SSF53335">
    <property type="entry name" value="S-adenosyl-L-methionine-dependent methyltransferases"/>
    <property type="match status" value="1"/>
</dbReference>
<dbReference type="PROSITE" id="PS51608">
    <property type="entry name" value="SAM_MT_UBIE"/>
    <property type="match status" value="1"/>
</dbReference>
<dbReference type="PROSITE" id="PS01183">
    <property type="entry name" value="UBIE_1"/>
    <property type="match status" value="1"/>
</dbReference>
<protein>
    <recommendedName>
        <fullName evidence="1">Ubiquinone/menaquinone biosynthesis C-methyltransferase UbiE</fullName>
        <ecNumber evidence="1">2.1.1.163</ecNumber>
        <ecNumber evidence="1">2.1.1.201</ecNumber>
    </recommendedName>
    <alternativeName>
        <fullName evidence="1">2-methoxy-6-polyprenyl-1,4-benzoquinol methylase</fullName>
    </alternativeName>
    <alternativeName>
        <fullName evidence="1">Demethylmenaquinone methyltransferase</fullName>
    </alternativeName>
</protein>